<comment type="function">
    <text evidence="1">With CysN forms the ATP sulfurylase (ATPS) that catalyzes the adenylation of sulfate producing adenosine 5'-phosphosulfate (APS) and diphosphate, the first enzymatic step in sulfur assimilation pathway. APS synthesis involves the formation of a high-energy phosphoric-sulfuric acid anhydride bond driven by GTP hydrolysis by CysN coupled to ATP hydrolysis by CysD.</text>
</comment>
<comment type="catalytic activity">
    <reaction evidence="1">
        <text>sulfate + ATP + H(+) = adenosine 5'-phosphosulfate + diphosphate</text>
        <dbReference type="Rhea" id="RHEA:18133"/>
        <dbReference type="ChEBI" id="CHEBI:15378"/>
        <dbReference type="ChEBI" id="CHEBI:16189"/>
        <dbReference type="ChEBI" id="CHEBI:30616"/>
        <dbReference type="ChEBI" id="CHEBI:33019"/>
        <dbReference type="ChEBI" id="CHEBI:58243"/>
        <dbReference type="EC" id="2.7.7.4"/>
    </reaction>
</comment>
<comment type="pathway">
    <text evidence="1">Sulfur metabolism; hydrogen sulfide biosynthesis; sulfite from sulfate: step 1/3.</text>
</comment>
<comment type="subunit">
    <text evidence="1">Heterodimer composed of CysD, the smaller subunit, and CysN.</text>
</comment>
<comment type="similarity">
    <text evidence="1">Belongs to the PAPS reductase family. CysD subfamily.</text>
</comment>
<sequence>MSGPVLSHLEQLEAESIQIFREVAAEFDNPVMLYSIGKDSSVLLHLARKAFYPGKIPFPLLHVDTDWKFREMIKFRDEAAVKYGFDLLVHKNPEGLAMGMNPFTFGSSKHTDVMKTEGLKQALNKYGFDAAFGGARRDEEKSRAKERVYSFRDSKHRWDPKNQRPELWHTYNGQVNKGESIRVFPLSNWTELDIWQYIYQENIDIVPLYFADYRPVVERNGTLIMVDDERMPLNEGEVPEQKLVRFRTLGCYPLTGAIESSATTLTGIIEEMLLSRSSERQGRVIDHDSSGSMEKKKREGYF</sequence>
<keyword id="KW-0067">ATP-binding</keyword>
<keyword id="KW-0547">Nucleotide-binding</keyword>
<keyword id="KW-0548">Nucleotidyltransferase</keyword>
<keyword id="KW-1185">Reference proteome</keyword>
<keyword id="KW-0808">Transferase</keyword>
<accession>A1S9N7</accession>
<proteinExistence type="inferred from homology"/>
<organism>
    <name type="scientific">Shewanella amazonensis (strain ATCC BAA-1098 / SB2B)</name>
    <dbReference type="NCBI Taxonomy" id="326297"/>
    <lineage>
        <taxon>Bacteria</taxon>
        <taxon>Pseudomonadati</taxon>
        <taxon>Pseudomonadota</taxon>
        <taxon>Gammaproteobacteria</taxon>
        <taxon>Alteromonadales</taxon>
        <taxon>Shewanellaceae</taxon>
        <taxon>Shewanella</taxon>
    </lineage>
</organism>
<feature type="chain" id="PRO_1000008981" description="Sulfate adenylyltransferase subunit 2">
    <location>
        <begin position="1"/>
        <end position="302"/>
    </location>
</feature>
<feature type="region of interest" description="Disordered" evidence="2">
    <location>
        <begin position="280"/>
        <end position="302"/>
    </location>
</feature>
<evidence type="ECO:0000255" key="1">
    <source>
        <dbReference type="HAMAP-Rule" id="MF_00064"/>
    </source>
</evidence>
<evidence type="ECO:0000256" key="2">
    <source>
        <dbReference type="SAM" id="MobiDB-lite"/>
    </source>
</evidence>
<dbReference type="EC" id="2.7.7.4" evidence="1"/>
<dbReference type="EMBL" id="CP000507">
    <property type="protein sequence ID" value="ABM01094.1"/>
    <property type="molecule type" value="Genomic_DNA"/>
</dbReference>
<dbReference type="RefSeq" id="WP_011760999.1">
    <property type="nucleotide sequence ID" value="NC_008700.1"/>
</dbReference>
<dbReference type="SMR" id="A1S9N7"/>
<dbReference type="STRING" id="326297.Sama_2891"/>
<dbReference type="KEGG" id="saz:Sama_2891"/>
<dbReference type="eggNOG" id="COG0175">
    <property type="taxonomic scope" value="Bacteria"/>
</dbReference>
<dbReference type="HOGENOM" id="CLU_043026_0_0_6"/>
<dbReference type="OrthoDB" id="9772604at2"/>
<dbReference type="UniPathway" id="UPA00140">
    <property type="reaction ID" value="UER00204"/>
</dbReference>
<dbReference type="Proteomes" id="UP000009175">
    <property type="component" value="Chromosome"/>
</dbReference>
<dbReference type="GO" id="GO:0005524">
    <property type="term" value="F:ATP binding"/>
    <property type="evidence" value="ECO:0007669"/>
    <property type="project" value="UniProtKB-KW"/>
</dbReference>
<dbReference type="GO" id="GO:0004781">
    <property type="term" value="F:sulfate adenylyltransferase (ATP) activity"/>
    <property type="evidence" value="ECO:0007669"/>
    <property type="project" value="UniProtKB-UniRule"/>
</dbReference>
<dbReference type="GO" id="GO:0070814">
    <property type="term" value="P:hydrogen sulfide biosynthetic process"/>
    <property type="evidence" value="ECO:0007669"/>
    <property type="project" value="UniProtKB-UniRule"/>
</dbReference>
<dbReference type="GO" id="GO:0000103">
    <property type="term" value="P:sulfate assimilation"/>
    <property type="evidence" value="ECO:0007669"/>
    <property type="project" value="UniProtKB-UniRule"/>
</dbReference>
<dbReference type="CDD" id="cd23946">
    <property type="entry name" value="Sulfate_adenylyltransferase_2"/>
    <property type="match status" value="1"/>
</dbReference>
<dbReference type="FunFam" id="3.40.50.620:FF:000002">
    <property type="entry name" value="Sulfate adenylyltransferase subunit 2"/>
    <property type="match status" value="1"/>
</dbReference>
<dbReference type="Gene3D" id="3.40.50.620">
    <property type="entry name" value="HUPs"/>
    <property type="match status" value="1"/>
</dbReference>
<dbReference type="HAMAP" id="MF_00064">
    <property type="entry name" value="Sulf_adenylyltr_sub2"/>
    <property type="match status" value="1"/>
</dbReference>
<dbReference type="InterPro" id="IPR002500">
    <property type="entry name" value="PAPS_reduct_dom"/>
</dbReference>
<dbReference type="InterPro" id="IPR014729">
    <property type="entry name" value="Rossmann-like_a/b/a_fold"/>
</dbReference>
<dbReference type="InterPro" id="IPR011784">
    <property type="entry name" value="SO4_adenylTrfase_ssu"/>
</dbReference>
<dbReference type="InterPro" id="IPR050128">
    <property type="entry name" value="Sulfate_adenylyltrnsfr_sub2"/>
</dbReference>
<dbReference type="NCBIfam" id="TIGR02039">
    <property type="entry name" value="CysD"/>
    <property type="match status" value="1"/>
</dbReference>
<dbReference type="NCBIfam" id="NF003587">
    <property type="entry name" value="PRK05253.1"/>
    <property type="match status" value="1"/>
</dbReference>
<dbReference type="NCBIfam" id="NF009214">
    <property type="entry name" value="PRK12563.1"/>
    <property type="match status" value="1"/>
</dbReference>
<dbReference type="PANTHER" id="PTHR43196">
    <property type="entry name" value="SULFATE ADENYLYLTRANSFERASE SUBUNIT 2"/>
    <property type="match status" value="1"/>
</dbReference>
<dbReference type="PANTHER" id="PTHR43196:SF1">
    <property type="entry name" value="SULFATE ADENYLYLTRANSFERASE SUBUNIT 2"/>
    <property type="match status" value="1"/>
</dbReference>
<dbReference type="Pfam" id="PF01507">
    <property type="entry name" value="PAPS_reduct"/>
    <property type="match status" value="1"/>
</dbReference>
<dbReference type="PIRSF" id="PIRSF002936">
    <property type="entry name" value="CysDAde_trans"/>
    <property type="match status" value="1"/>
</dbReference>
<dbReference type="SUPFAM" id="SSF52402">
    <property type="entry name" value="Adenine nucleotide alpha hydrolases-like"/>
    <property type="match status" value="1"/>
</dbReference>
<protein>
    <recommendedName>
        <fullName evidence="1">Sulfate adenylyltransferase subunit 2</fullName>
        <ecNumber evidence="1">2.7.7.4</ecNumber>
    </recommendedName>
    <alternativeName>
        <fullName evidence="1">ATP-sulfurylase small subunit</fullName>
    </alternativeName>
    <alternativeName>
        <fullName evidence="1">Sulfate adenylate transferase</fullName>
        <shortName evidence="1">SAT</shortName>
    </alternativeName>
</protein>
<name>CYSD_SHEAM</name>
<gene>
    <name evidence="1" type="primary">cysD</name>
    <name type="ordered locus">Sama_2891</name>
</gene>
<reference key="1">
    <citation type="submission" date="2006-12" db="EMBL/GenBank/DDBJ databases">
        <title>Complete sequence of Shewanella amazonensis SB2B.</title>
        <authorList>
            <consortium name="US DOE Joint Genome Institute"/>
            <person name="Copeland A."/>
            <person name="Lucas S."/>
            <person name="Lapidus A."/>
            <person name="Barry K."/>
            <person name="Detter J.C."/>
            <person name="Glavina del Rio T."/>
            <person name="Hammon N."/>
            <person name="Israni S."/>
            <person name="Dalin E."/>
            <person name="Tice H."/>
            <person name="Pitluck S."/>
            <person name="Munk A.C."/>
            <person name="Brettin T."/>
            <person name="Bruce D."/>
            <person name="Han C."/>
            <person name="Tapia R."/>
            <person name="Gilna P."/>
            <person name="Schmutz J."/>
            <person name="Larimer F."/>
            <person name="Land M."/>
            <person name="Hauser L."/>
            <person name="Kyrpides N."/>
            <person name="Mikhailova N."/>
            <person name="Fredrickson J."/>
            <person name="Richardson P."/>
        </authorList>
    </citation>
    <scope>NUCLEOTIDE SEQUENCE [LARGE SCALE GENOMIC DNA]</scope>
    <source>
        <strain>ATCC BAA-1098 / SB2B</strain>
    </source>
</reference>